<name>RL22_SALTY</name>
<sequence length="110" mass="12226">METIAKHRHARSSAQKVRLVADLIRGKKVSQALDILTYTNKKAAVLVKKVLESAIANAEHNDGADIDDLKVTKIFVDEGPSMKRIMPRAKGRADRILKRTSHITVVVSDR</sequence>
<protein>
    <recommendedName>
        <fullName evidence="1">Large ribosomal subunit protein uL22</fullName>
    </recommendedName>
    <alternativeName>
        <fullName evidence="2">50S ribosomal protein L22</fullName>
    </alternativeName>
</protein>
<organism>
    <name type="scientific">Salmonella typhimurium (strain LT2 / SGSC1412 / ATCC 700720)</name>
    <dbReference type="NCBI Taxonomy" id="99287"/>
    <lineage>
        <taxon>Bacteria</taxon>
        <taxon>Pseudomonadati</taxon>
        <taxon>Pseudomonadota</taxon>
        <taxon>Gammaproteobacteria</taxon>
        <taxon>Enterobacterales</taxon>
        <taxon>Enterobacteriaceae</taxon>
        <taxon>Salmonella</taxon>
    </lineage>
</organism>
<feature type="chain" id="PRO_0000125216" description="Large ribosomal subunit protein uL22">
    <location>
        <begin position="1"/>
        <end position="110"/>
    </location>
</feature>
<reference key="1">
    <citation type="journal article" date="2001" name="Nature">
        <title>Complete genome sequence of Salmonella enterica serovar Typhimurium LT2.</title>
        <authorList>
            <person name="McClelland M."/>
            <person name="Sanderson K.E."/>
            <person name="Spieth J."/>
            <person name="Clifton S.W."/>
            <person name="Latreille P."/>
            <person name="Courtney L."/>
            <person name="Porwollik S."/>
            <person name="Ali J."/>
            <person name="Dante M."/>
            <person name="Du F."/>
            <person name="Hou S."/>
            <person name="Layman D."/>
            <person name="Leonard S."/>
            <person name="Nguyen C."/>
            <person name="Scott K."/>
            <person name="Holmes A."/>
            <person name="Grewal N."/>
            <person name="Mulvaney E."/>
            <person name="Ryan E."/>
            <person name="Sun H."/>
            <person name="Florea L."/>
            <person name="Miller W."/>
            <person name="Stoneking T."/>
            <person name="Nhan M."/>
            <person name="Waterston R."/>
            <person name="Wilson R.K."/>
        </authorList>
    </citation>
    <scope>NUCLEOTIDE SEQUENCE [LARGE SCALE GENOMIC DNA]</scope>
    <source>
        <strain>LT2 / SGSC1412 / ATCC 700720</strain>
    </source>
</reference>
<accession>P61179</accession>
<accession>P02423</accession>
<keyword id="KW-1185">Reference proteome</keyword>
<keyword id="KW-0687">Ribonucleoprotein</keyword>
<keyword id="KW-0689">Ribosomal protein</keyword>
<keyword id="KW-0694">RNA-binding</keyword>
<keyword id="KW-0699">rRNA-binding</keyword>
<gene>
    <name evidence="1" type="primary">rplV</name>
    <name type="ordered locus">STM3435</name>
</gene>
<comment type="function">
    <text evidence="1">This protein binds specifically to 23S rRNA; its binding is stimulated by other ribosomal proteins, e.g. L4, L17, and L20. It is important during the early stages of 50S assembly. It makes multiple contacts with different domains of the 23S rRNA in the assembled 50S subunit and ribosome (By similarity).</text>
</comment>
<comment type="function">
    <text evidence="1">The globular domain of the protein is located near the polypeptide exit tunnel on the outside of the subunit, while an extended beta-hairpin is found that lines the wall of the exit tunnel in the center of the 70S ribosome.</text>
</comment>
<comment type="subunit">
    <text evidence="1">Part of the 50S ribosomal subunit.</text>
</comment>
<comment type="similarity">
    <text evidence="1">Belongs to the universal ribosomal protein uL22 family.</text>
</comment>
<dbReference type="EMBL" id="AE006468">
    <property type="protein sequence ID" value="AAL22298.1"/>
    <property type="molecule type" value="Genomic_DNA"/>
</dbReference>
<dbReference type="RefSeq" id="NP_462339.1">
    <property type="nucleotide sequence ID" value="NC_003197.2"/>
</dbReference>
<dbReference type="RefSeq" id="WP_000447529.1">
    <property type="nucleotide sequence ID" value="NC_003197.2"/>
</dbReference>
<dbReference type="SMR" id="P61179"/>
<dbReference type="STRING" id="99287.STM3435"/>
<dbReference type="PaxDb" id="99287-STM3435"/>
<dbReference type="GeneID" id="1254958"/>
<dbReference type="GeneID" id="93778672"/>
<dbReference type="KEGG" id="stm:STM3435"/>
<dbReference type="PATRIC" id="fig|99287.12.peg.3632"/>
<dbReference type="HOGENOM" id="CLU_083987_3_3_6"/>
<dbReference type="OMA" id="KRIQPRA"/>
<dbReference type="PhylomeDB" id="P61179"/>
<dbReference type="BioCyc" id="SENT99287:STM3435-MONOMER"/>
<dbReference type="PRO" id="PR:P61179"/>
<dbReference type="Proteomes" id="UP000001014">
    <property type="component" value="Chromosome"/>
</dbReference>
<dbReference type="GO" id="GO:0022625">
    <property type="term" value="C:cytosolic large ribosomal subunit"/>
    <property type="evidence" value="ECO:0000318"/>
    <property type="project" value="GO_Central"/>
</dbReference>
<dbReference type="GO" id="GO:0019843">
    <property type="term" value="F:rRNA binding"/>
    <property type="evidence" value="ECO:0007669"/>
    <property type="project" value="UniProtKB-UniRule"/>
</dbReference>
<dbReference type="GO" id="GO:0003735">
    <property type="term" value="F:structural constituent of ribosome"/>
    <property type="evidence" value="ECO:0000318"/>
    <property type="project" value="GO_Central"/>
</dbReference>
<dbReference type="GO" id="GO:0006412">
    <property type="term" value="P:translation"/>
    <property type="evidence" value="ECO:0000318"/>
    <property type="project" value="GO_Central"/>
</dbReference>
<dbReference type="CDD" id="cd00336">
    <property type="entry name" value="Ribosomal_L22"/>
    <property type="match status" value="1"/>
</dbReference>
<dbReference type="FunFam" id="3.90.470.10:FF:000001">
    <property type="entry name" value="50S ribosomal protein L22"/>
    <property type="match status" value="1"/>
</dbReference>
<dbReference type="Gene3D" id="3.90.470.10">
    <property type="entry name" value="Ribosomal protein L22/L17"/>
    <property type="match status" value="1"/>
</dbReference>
<dbReference type="HAMAP" id="MF_01331_B">
    <property type="entry name" value="Ribosomal_uL22_B"/>
    <property type="match status" value="1"/>
</dbReference>
<dbReference type="InterPro" id="IPR001063">
    <property type="entry name" value="Ribosomal_uL22"/>
</dbReference>
<dbReference type="InterPro" id="IPR005727">
    <property type="entry name" value="Ribosomal_uL22_bac/chlpt-type"/>
</dbReference>
<dbReference type="InterPro" id="IPR047867">
    <property type="entry name" value="Ribosomal_uL22_bac/org-type"/>
</dbReference>
<dbReference type="InterPro" id="IPR018260">
    <property type="entry name" value="Ribosomal_uL22_CS"/>
</dbReference>
<dbReference type="InterPro" id="IPR036394">
    <property type="entry name" value="Ribosomal_uL22_sf"/>
</dbReference>
<dbReference type="NCBIfam" id="TIGR01044">
    <property type="entry name" value="rplV_bact"/>
    <property type="match status" value="1"/>
</dbReference>
<dbReference type="PANTHER" id="PTHR13501">
    <property type="entry name" value="CHLOROPLAST 50S RIBOSOMAL PROTEIN L22-RELATED"/>
    <property type="match status" value="1"/>
</dbReference>
<dbReference type="PANTHER" id="PTHR13501:SF8">
    <property type="entry name" value="LARGE RIBOSOMAL SUBUNIT PROTEIN UL22M"/>
    <property type="match status" value="1"/>
</dbReference>
<dbReference type="Pfam" id="PF00237">
    <property type="entry name" value="Ribosomal_L22"/>
    <property type="match status" value="1"/>
</dbReference>
<dbReference type="SUPFAM" id="SSF54843">
    <property type="entry name" value="Ribosomal protein L22"/>
    <property type="match status" value="1"/>
</dbReference>
<dbReference type="PROSITE" id="PS00464">
    <property type="entry name" value="RIBOSOMAL_L22"/>
    <property type="match status" value="1"/>
</dbReference>
<proteinExistence type="inferred from homology"/>
<evidence type="ECO:0000255" key="1">
    <source>
        <dbReference type="HAMAP-Rule" id="MF_01331"/>
    </source>
</evidence>
<evidence type="ECO:0000305" key="2"/>